<dbReference type="EC" id="2.1.1.186" evidence="1"/>
<dbReference type="EMBL" id="CP001657">
    <property type="protein sequence ID" value="ACT11979.1"/>
    <property type="molecule type" value="Genomic_DNA"/>
</dbReference>
<dbReference type="RefSeq" id="WP_012773619.1">
    <property type="nucleotide sequence ID" value="NC_012917.1"/>
</dbReference>
<dbReference type="SMR" id="C6DAH1"/>
<dbReference type="STRING" id="561230.PC1_0929"/>
<dbReference type="KEGG" id="pct:PC1_0929"/>
<dbReference type="eggNOG" id="COG2933">
    <property type="taxonomic scope" value="Bacteria"/>
</dbReference>
<dbReference type="HOGENOM" id="CLU_043780_0_0_6"/>
<dbReference type="OrthoDB" id="154490at2"/>
<dbReference type="Proteomes" id="UP000002736">
    <property type="component" value="Chromosome"/>
</dbReference>
<dbReference type="GO" id="GO:0005737">
    <property type="term" value="C:cytoplasm"/>
    <property type="evidence" value="ECO:0007669"/>
    <property type="project" value="UniProtKB-SubCell"/>
</dbReference>
<dbReference type="GO" id="GO:0008757">
    <property type="term" value="F:S-adenosylmethionine-dependent methyltransferase activity"/>
    <property type="evidence" value="ECO:0007669"/>
    <property type="project" value="UniProtKB-UniRule"/>
</dbReference>
<dbReference type="GO" id="GO:0032259">
    <property type="term" value="P:methylation"/>
    <property type="evidence" value="ECO:0007669"/>
    <property type="project" value="UniProtKB-KW"/>
</dbReference>
<dbReference type="GO" id="GO:0006364">
    <property type="term" value="P:rRNA processing"/>
    <property type="evidence" value="ECO:0007669"/>
    <property type="project" value="UniProtKB-UniRule"/>
</dbReference>
<dbReference type="Gene3D" id="3.30.2300.20">
    <property type="match status" value="1"/>
</dbReference>
<dbReference type="Gene3D" id="3.30.70.2810">
    <property type="match status" value="1"/>
</dbReference>
<dbReference type="Gene3D" id="3.40.50.150">
    <property type="entry name" value="Vaccinia Virus protein VP39"/>
    <property type="match status" value="1"/>
</dbReference>
<dbReference type="HAMAP" id="MF_01551">
    <property type="entry name" value="23SrRNA_methyltr_M"/>
    <property type="match status" value="1"/>
</dbReference>
<dbReference type="InterPro" id="IPR040739">
    <property type="entry name" value="RlmM_FDX"/>
</dbReference>
<dbReference type="InterPro" id="IPR048646">
    <property type="entry name" value="RlmM_THUMP-like"/>
</dbReference>
<dbReference type="InterPro" id="IPR002877">
    <property type="entry name" value="RNA_MeTrfase_FtsJ_dom"/>
</dbReference>
<dbReference type="InterPro" id="IPR011224">
    <property type="entry name" value="rRNA_MeTrfase_M"/>
</dbReference>
<dbReference type="InterPro" id="IPR029063">
    <property type="entry name" value="SAM-dependent_MTases_sf"/>
</dbReference>
<dbReference type="NCBIfam" id="NF008734">
    <property type="entry name" value="PRK11760.1"/>
    <property type="match status" value="1"/>
</dbReference>
<dbReference type="PANTHER" id="PTHR37524">
    <property type="entry name" value="RIBOSOMAL RNA LARGE SUBUNIT METHYLTRANSFERASE M"/>
    <property type="match status" value="1"/>
</dbReference>
<dbReference type="PANTHER" id="PTHR37524:SF2">
    <property type="entry name" value="RIBOSOMAL RNA METHYLTRANSFERASE FTSJ DOMAIN-CONTAINING PROTEIN"/>
    <property type="match status" value="1"/>
</dbReference>
<dbReference type="Pfam" id="PF01728">
    <property type="entry name" value="FtsJ"/>
    <property type="match status" value="1"/>
</dbReference>
<dbReference type="Pfam" id="PF18125">
    <property type="entry name" value="RlmM_FDX"/>
    <property type="match status" value="1"/>
</dbReference>
<dbReference type="Pfam" id="PF21239">
    <property type="entry name" value="RLMM_N"/>
    <property type="match status" value="1"/>
</dbReference>
<dbReference type="PIRSF" id="PIRSF028774">
    <property type="entry name" value="UCP028774"/>
    <property type="match status" value="1"/>
</dbReference>
<dbReference type="SUPFAM" id="SSF53335">
    <property type="entry name" value="S-adenosyl-L-methionine-dependent methyltransferases"/>
    <property type="match status" value="1"/>
</dbReference>
<name>RLMM_PECCP</name>
<protein>
    <recommendedName>
        <fullName evidence="1">Ribosomal RNA large subunit methyltransferase M</fullName>
        <ecNumber evidence="1">2.1.1.186</ecNumber>
    </recommendedName>
    <alternativeName>
        <fullName evidence="1">23S rRNA (cytidine2498-2'-O)-methyltransferase</fullName>
    </alternativeName>
    <alternativeName>
        <fullName evidence="1">23S rRNA 2'-O-ribose methyltransferase RlmM</fullName>
    </alternativeName>
</protein>
<accession>C6DAH1</accession>
<gene>
    <name evidence="1" type="primary">rlmM</name>
    <name type="ordered locus">PC1_0929</name>
</gene>
<feature type="chain" id="PRO_1000215470" description="Ribosomal RNA large subunit methyltransferase M">
    <location>
        <begin position="1"/>
        <end position="366"/>
    </location>
</feature>
<feature type="active site" description="Proton acceptor" evidence="1">
    <location>
        <position position="306"/>
    </location>
</feature>
<feature type="binding site" evidence="1">
    <location>
        <position position="188"/>
    </location>
    <ligand>
        <name>S-adenosyl-L-methionine</name>
        <dbReference type="ChEBI" id="CHEBI:59789"/>
    </ligand>
</feature>
<feature type="binding site" evidence="1">
    <location>
        <begin position="221"/>
        <end position="224"/>
    </location>
    <ligand>
        <name>S-adenosyl-L-methionine</name>
        <dbReference type="ChEBI" id="CHEBI:59789"/>
    </ligand>
</feature>
<feature type="binding site" evidence="1">
    <location>
        <position position="240"/>
    </location>
    <ligand>
        <name>S-adenosyl-L-methionine</name>
        <dbReference type="ChEBI" id="CHEBI:59789"/>
    </ligand>
</feature>
<feature type="binding site" evidence="1">
    <location>
        <position position="260"/>
    </location>
    <ligand>
        <name>S-adenosyl-L-methionine</name>
        <dbReference type="ChEBI" id="CHEBI:59789"/>
    </ligand>
</feature>
<feature type="binding site" evidence="1">
    <location>
        <position position="277"/>
    </location>
    <ligand>
        <name>S-adenosyl-L-methionine</name>
        <dbReference type="ChEBI" id="CHEBI:59789"/>
    </ligand>
</feature>
<comment type="function">
    <text evidence="1">Catalyzes the 2'-O-methylation at nucleotide C2498 in 23S rRNA.</text>
</comment>
<comment type="catalytic activity">
    <reaction evidence="1">
        <text>cytidine(2498) in 23S rRNA + S-adenosyl-L-methionine = 2'-O-methylcytidine(2498) in 23S rRNA + S-adenosyl-L-homocysteine + H(+)</text>
        <dbReference type="Rhea" id="RHEA:42788"/>
        <dbReference type="Rhea" id="RHEA-COMP:10244"/>
        <dbReference type="Rhea" id="RHEA-COMP:10245"/>
        <dbReference type="ChEBI" id="CHEBI:15378"/>
        <dbReference type="ChEBI" id="CHEBI:57856"/>
        <dbReference type="ChEBI" id="CHEBI:59789"/>
        <dbReference type="ChEBI" id="CHEBI:74495"/>
        <dbReference type="ChEBI" id="CHEBI:82748"/>
        <dbReference type="EC" id="2.1.1.186"/>
    </reaction>
</comment>
<comment type="subunit">
    <text evidence="1">Monomer.</text>
</comment>
<comment type="subcellular location">
    <subcellularLocation>
        <location evidence="1">Cytoplasm</location>
    </subcellularLocation>
</comment>
<comment type="similarity">
    <text evidence="1">Belongs to the class I-like SAM-binding methyltransferase superfamily. RNA methyltransferase RlmE family. RlmM subfamily.</text>
</comment>
<proteinExistence type="inferred from homology"/>
<reference key="1">
    <citation type="submission" date="2009-07" db="EMBL/GenBank/DDBJ databases">
        <title>Complete sequence of Pectobacterium carotovorum subsp. carotovorum PC1.</title>
        <authorList>
            <consortium name="US DOE Joint Genome Institute"/>
            <person name="Lucas S."/>
            <person name="Copeland A."/>
            <person name="Lapidus A."/>
            <person name="Glavina del Rio T."/>
            <person name="Tice H."/>
            <person name="Bruce D."/>
            <person name="Goodwin L."/>
            <person name="Pitluck S."/>
            <person name="Munk A.C."/>
            <person name="Brettin T."/>
            <person name="Detter J.C."/>
            <person name="Han C."/>
            <person name="Tapia R."/>
            <person name="Larimer F."/>
            <person name="Land M."/>
            <person name="Hauser L."/>
            <person name="Kyrpides N."/>
            <person name="Mikhailova N."/>
            <person name="Balakrishnan V."/>
            <person name="Glasner J."/>
            <person name="Perna N.T."/>
        </authorList>
    </citation>
    <scope>NUCLEOTIDE SEQUENCE [LARGE SCALE GENOMIC DNA]</scope>
    <source>
        <strain>PC1</strain>
    </source>
</reference>
<sequence length="366" mass="42123">MNRVILYCRPGFEKECAAEITEKATQHDAYGFARVKENSGYVVFECYQHEDAERLVKTLPFHELIFARQMFVSGELLRDLPPEDRITPIVGMLSGAIERAGELRVEVPDTNESKELMKFCRKFTVPLRAALREHKILLGYEKADRPVLHVLFIAPGCCYVGYSYSNNNSPFYMGIPRLKFPSDAPSRSTLKLEEAFHVFIPADEWDERLGSGMYAVDLGACPGGWTYQLVKRSMMVYAVDNGPMAPSLMETGQVMHHQADGFRFEPPRNNVYWLVCDMVEKPAKVTSLMSDWLIKGWCREAIFNLKLPMKKRYEEVSHNLAVLQERLSENGINAEVHAKHLYHDREEITVHVRRFWSAVPGRRDER</sequence>
<organism>
    <name type="scientific">Pectobacterium carotovorum subsp. carotovorum (strain PC1)</name>
    <dbReference type="NCBI Taxonomy" id="561230"/>
    <lineage>
        <taxon>Bacteria</taxon>
        <taxon>Pseudomonadati</taxon>
        <taxon>Pseudomonadota</taxon>
        <taxon>Gammaproteobacteria</taxon>
        <taxon>Enterobacterales</taxon>
        <taxon>Pectobacteriaceae</taxon>
        <taxon>Pectobacterium</taxon>
    </lineage>
</organism>
<keyword id="KW-0963">Cytoplasm</keyword>
<keyword id="KW-0489">Methyltransferase</keyword>
<keyword id="KW-0698">rRNA processing</keyword>
<keyword id="KW-0949">S-adenosyl-L-methionine</keyword>
<keyword id="KW-0808">Transferase</keyword>
<evidence type="ECO:0000255" key="1">
    <source>
        <dbReference type="HAMAP-Rule" id="MF_01551"/>
    </source>
</evidence>